<organism>
    <name type="scientific">Schizosaccharomyces pombe (strain 972 / ATCC 24843)</name>
    <name type="common">Fission yeast</name>
    <dbReference type="NCBI Taxonomy" id="284812"/>
    <lineage>
        <taxon>Eukaryota</taxon>
        <taxon>Fungi</taxon>
        <taxon>Dikarya</taxon>
        <taxon>Ascomycota</taxon>
        <taxon>Taphrinomycotina</taxon>
        <taxon>Schizosaccharomycetes</taxon>
        <taxon>Schizosaccharomycetales</taxon>
        <taxon>Schizosaccharomycetaceae</taxon>
        <taxon>Schizosaccharomyces</taxon>
    </lineage>
</organism>
<proteinExistence type="inferred from homology"/>
<evidence type="ECO:0000255" key="1"/>
<evidence type="ECO:0000255" key="2">
    <source>
        <dbReference type="PROSITE-ProRule" id="PRU00163"/>
    </source>
</evidence>
<evidence type="ECO:0000256" key="3">
    <source>
        <dbReference type="SAM" id="MobiDB-lite"/>
    </source>
</evidence>
<evidence type="ECO:0000269" key="4">
    <source>
    </source>
</evidence>
<evidence type="ECO:0000305" key="5"/>
<accession>O94419</accession>
<keyword id="KW-0175">Coiled coil</keyword>
<keyword id="KW-0963">Cytoplasm</keyword>
<keyword id="KW-0343">GTPase activation</keyword>
<keyword id="KW-0539">Nucleus</keyword>
<keyword id="KW-1185">Reference proteome</keyword>
<dbReference type="EMBL" id="CU329672">
    <property type="protein sequence ID" value="CAA22496.2"/>
    <property type="molecule type" value="Genomic_DNA"/>
</dbReference>
<dbReference type="PIR" id="T41042">
    <property type="entry name" value="T41042"/>
</dbReference>
<dbReference type="RefSeq" id="NP_588470.2">
    <property type="nucleotide sequence ID" value="NM_001023461.2"/>
</dbReference>
<dbReference type="SMR" id="O94419"/>
<dbReference type="BioGRID" id="275446">
    <property type="interactions" value="13"/>
</dbReference>
<dbReference type="iPTMnet" id="O94419"/>
<dbReference type="PaxDb" id="4896-SPCC1620.12c.1"/>
<dbReference type="EnsemblFungi" id="SPCC1620.12c.1">
    <property type="protein sequence ID" value="SPCC1620.12c.1:pep"/>
    <property type="gene ID" value="SPCC1620.12c"/>
</dbReference>
<dbReference type="PomBase" id="SPCC1620.12c"/>
<dbReference type="VEuPathDB" id="FungiDB:SPCC1620.12c"/>
<dbReference type="eggNOG" id="KOG1102">
    <property type="taxonomic scope" value="Eukaryota"/>
</dbReference>
<dbReference type="HOGENOM" id="CLU_427692_0_0_1"/>
<dbReference type="InParanoid" id="O94419"/>
<dbReference type="PRO" id="PR:O94419"/>
<dbReference type="Proteomes" id="UP000002485">
    <property type="component" value="Chromosome III"/>
</dbReference>
<dbReference type="GO" id="GO:0005829">
    <property type="term" value="C:cytosol"/>
    <property type="evidence" value="ECO:0007005"/>
    <property type="project" value="PomBase"/>
</dbReference>
<dbReference type="GO" id="GO:0005798">
    <property type="term" value="C:Golgi-associated vesicle"/>
    <property type="evidence" value="ECO:0000266"/>
    <property type="project" value="PomBase"/>
</dbReference>
<dbReference type="GO" id="GO:0005634">
    <property type="term" value="C:nucleus"/>
    <property type="evidence" value="ECO:0007005"/>
    <property type="project" value="PomBase"/>
</dbReference>
<dbReference type="GO" id="GO:0005886">
    <property type="term" value="C:plasma membrane"/>
    <property type="evidence" value="ECO:0000266"/>
    <property type="project" value="PomBase"/>
</dbReference>
<dbReference type="GO" id="GO:0005096">
    <property type="term" value="F:GTPase activator activity"/>
    <property type="evidence" value="ECO:0000266"/>
    <property type="project" value="PomBase"/>
</dbReference>
<dbReference type="GO" id="GO:0006888">
    <property type="term" value="P:endoplasmic reticulum to Golgi vesicle-mediated transport"/>
    <property type="evidence" value="ECO:0000266"/>
    <property type="project" value="PomBase"/>
</dbReference>
<dbReference type="GO" id="GO:0023052">
    <property type="term" value="P:signaling"/>
    <property type="evidence" value="ECO:0000305"/>
    <property type="project" value="PomBase"/>
</dbReference>
<dbReference type="Gene3D" id="1.10.472.80">
    <property type="entry name" value="Ypt/Rab-GAP domain of gyp1p, domain 3"/>
    <property type="match status" value="1"/>
</dbReference>
<dbReference type="InterPro" id="IPR000195">
    <property type="entry name" value="Rab-GAP-TBC_dom"/>
</dbReference>
<dbReference type="InterPro" id="IPR035969">
    <property type="entry name" value="Rab-GAP_TBC_sf"/>
</dbReference>
<dbReference type="InterPro" id="IPR050302">
    <property type="entry name" value="Rab_GAP_TBC_domain"/>
</dbReference>
<dbReference type="PANTHER" id="PTHR47219:SF9">
    <property type="entry name" value="GTPASE ACTIVATING PROTEIN AND CENTROSOME-ASSOCIATED, ISOFORM B"/>
    <property type="match status" value="1"/>
</dbReference>
<dbReference type="PANTHER" id="PTHR47219">
    <property type="entry name" value="RAB GTPASE-ACTIVATING PROTEIN 1-LIKE"/>
    <property type="match status" value="1"/>
</dbReference>
<dbReference type="Pfam" id="PF23436">
    <property type="entry name" value="RabGap-TBC_2"/>
    <property type="match status" value="1"/>
</dbReference>
<dbReference type="SMART" id="SM00164">
    <property type="entry name" value="TBC"/>
    <property type="match status" value="1"/>
</dbReference>
<dbReference type="SUPFAM" id="SSF47923">
    <property type="entry name" value="Ypt/Rab-GAP domain of gyp1p"/>
    <property type="match status" value="1"/>
</dbReference>
<dbReference type="PROSITE" id="PS50086">
    <property type="entry name" value="TBC_RABGAP"/>
    <property type="match status" value="1"/>
</dbReference>
<reference key="1">
    <citation type="journal article" date="2002" name="Nature">
        <title>The genome sequence of Schizosaccharomyces pombe.</title>
        <authorList>
            <person name="Wood V."/>
            <person name="Gwilliam R."/>
            <person name="Rajandream M.A."/>
            <person name="Lyne M.H."/>
            <person name="Lyne R."/>
            <person name="Stewart A."/>
            <person name="Sgouros J.G."/>
            <person name="Peat N."/>
            <person name="Hayles J."/>
            <person name="Baker S.G."/>
            <person name="Basham D."/>
            <person name="Bowman S."/>
            <person name="Brooks K."/>
            <person name="Brown D."/>
            <person name="Brown S."/>
            <person name="Chillingworth T."/>
            <person name="Churcher C.M."/>
            <person name="Collins M."/>
            <person name="Connor R."/>
            <person name="Cronin A."/>
            <person name="Davis P."/>
            <person name="Feltwell T."/>
            <person name="Fraser A."/>
            <person name="Gentles S."/>
            <person name="Goble A."/>
            <person name="Hamlin N."/>
            <person name="Harris D.E."/>
            <person name="Hidalgo J."/>
            <person name="Hodgson G."/>
            <person name="Holroyd S."/>
            <person name="Hornsby T."/>
            <person name="Howarth S."/>
            <person name="Huckle E.J."/>
            <person name="Hunt S."/>
            <person name="Jagels K."/>
            <person name="James K.D."/>
            <person name="Jones L."/>
            <person name="Jones M."/>
            <person name="Leather S."/>
            <person name="McDonald S."/>
            <person name="McLean J."/>
            <person name="Mooney P."/>
            <person name="Moule S."/>
            <person name="Mungall K.L."/>
            <person name="Murphy L.D."/>
            <person name="Niblett D."/>
            <person name="Odell C."/>
            <person name="Oliver K."/>
            <person name="O'Neil S."/>
            <person name="Pearson D."/>
            <person name="Quail M.A."/>
            <person name="Rabbinowitsch E."/>
            <person name="Rutherford K.M."/>
            <person name="Rutter S."/>
            <person name="Saunders D."/>
            <person name="Seeger K."/>
            <person name="Sharp S."/>
            <person name="Skelton J."/>
            <person name="Simmonds M.N."/>
            <person name="Squares R."/>
            <person name="Squares S."/>
            <person name="Stevens K."/>
            <person name="Taylor K."/>
            <person name="Taylor R.G."/>
            <person name="Tivey A."/>
            <person name="Walsh S.V."/>
            <person name="Warren T."/>
            <person name="Whitehead S."/>
            <person name="Woodward J.R."/>
            <person name="Volckaert G."/>
            <person name="Aert R."/>
            <person name="Robben J."/>
            <person name="Grymonprez B."/>
            <person name="Weltjens I."/>
            <person name="Vanstreels E."/>
            <person name="Rieger M."/>
            <person name="Schaefer M."/>
            <person name="Mueller-Auer S."/>
            <person name="Gabel C."/>
            <person name="Fuchs M."/>
            <person name="Duesterhoeft A."/>
            <person name="Fritzc C."/>
            <person name="Holzer E."/>
            <person name="Moestl D."/>
            <person name="Hilbert H."/>
            <person name="Borzym K."/>
            <person name="Langer I."/>
            <person name="Beck A."/>
            <person name="Lehrach H."/>
            <person name="Reinhardt R."/>
            <person name="Pohl T.M."/>
            <person name="Eger P."/>
            <person name="Zimmermann W."/>
            <person name="Wedler H."/>
            <person name="Wambutt R."/>
            <person name="Purnelle B."/>
            <person name="Goffeau A."/>
            <person name="Cadieu E."/>
            <person name="Dreano S."/>
            <person name="Gloux S."/>
            <person name="Lelaure V."/>
            <person name="Mottier S."/>
            <person name="Galibert F."/>
            <person name="Aves S.J."/>
            <person name="Xiang Z."/>
            <person name="Hunt C."/>
            <person name="Moore K."/>
            <person name="Hurst S.M."/>
            <person name="Lucas M."/>
            <person name="Rochet M."/>
            <person name="Gaillardin C."/>
            <person name="Tallada V.A."/>
            <person name="Garzon A."/>
            <person name="Thode G."/>
            <person name="Daga R.R."/>
            <person name="Cruzado L."/>
            <person name="Jimenez J."/>
            <person name="Sanchez M."/>
            <person name="del Rey F."/>
            <person name="Benito J."/>
            <person name="Dominguez A."/>
            <person name="Revuelta J.L."/>
            <person name="Moreno S."/>
            <person name="Armstrong J."/>
            <person name="Forsburg S.L."/>
            <person name="Cerutti L."/>
            <person name="Lowe T."/>
            <person name="McCombie W.R."/>
            <person name="Paulsen I."/>
            <person name="Potashkin J."/>
            <person name="Shpakovski G.V."/>
            <person name="Ussery D."/>
            <person name="Barrell B.G."/>
            <person name="Nurse P."/>
        </authorList>
    </citation>
    <scope>NUCLEOTIDE SEQUENCE [LARGE SCALE GENOMIC DNA]</scope>
    <source>
        <strain>972 / ATCC 24843</strain>
    </source>
</reference>
<reference key="2">
    <citation type="journal article" date="2011" name="Science">
        <title>Comparative functional genomics of the fission yeasts.</title>
        <authorList>
            <person name="Rhind N."/>
            <person name="Chen Z."/>
            <person name="Yassour M."/>
            <person name="Thompson D.A."/>
            <person name="Haas B.J."/>
            <person name="Habib N."/>
            <person name="Wapinski I."/>
            <person name="Roy S."/>
            <person name="Lin M.F."/>
            <person name="Heiman D.I."/>
            <person name="Young S.K."/>
            <person name="Furuya K."/>
            <person name="Guo Y."/>
            <person name="Pidoux A."/>
            <person name="Chen H.M."/>
            <person name="Robbertse B."/>
            <person name="Goldberg J.M."/>
            <person name="Aoki K."/>
            <person name="Bayne E.H."/>
            <person name="Berlin A.M."/>
            <person name="Desjardins C.A."/>
            <person name="Dobbs E."/>
            <person name="Dukaj L."/>
            <person name="Fan L."/>
            <person name="FitzGerald M.G."/>
            <person name="French C."/>
            <person name="Gujja S."/>
            <person name="Hansen K."/>
            <person name="Keifenheim D."/>
            <person name="Levin J.Z."/>
            <person name="Mosher R.A."/>
            <person name="Mueller C.A."/>
            <person name="Pfiffner J."/>
            <person name="Priest M."/>
            <person name="Russ C."/>
            <person name="Smialowska A."/>
            <person name="Swoboda P."/>
            <person name="Sykes S.M."/>
            <person name="Vaughn M."/>
            <person name="Vengrova S."/>
            <person name="Yoder R."/>
            <person name="Zeng Q."/>
            <person name="Allshire R."/>
            <person name="Baulcombe D."/>
            <person name="Birren B.W."/>
            <person name="Brown W."/>
            <person name="Ekwall K."/>
            <person name="Kellis M."/>
            <person name="Leatherwood J."/>
            <person name="Levin H."/>
            <person name="Margalit H."/>
            <person name="Martienssen R."/>
            <person name="Nieduszynski C.A."/>
            <person name="Spatafora J.W."/>
            <person name="Friedman N."/>
            <person name="Dalgaard J.Z."/>
            <person name="Baumann P."/>
            <person name="Niki H."/>
            <person name="Regev A."/>
            <person name="Nusbaum C."/>
        </authorList>
    </citation>
    <scope>REVISION OF GENE MODEL</scope>
</reference>
<reference key="3">
    <citation type="journal article" date="2006" name="Nat. Biotechnol.">
        <title>ORFeome cloning and global analysis of protein localization in the fission yeast Schizosaccharomyces pombe.</title>
        <authorList>
            <person name="Matsuyama A."/>
            <person name="Arai R."/>
            <person name="Yashiroda Y."/>
            <person name="Shirai A."/>
            <person name="Kamata A."/>
            <person name="Sekido S."/>
            <person name="Kobayashi Y."/>
            <person name="Hashimoto A."/>
            <person name="Hamamoto M."/>
            <person name="Hiraoka Y."/>
            <person name="Horinouchi S."/>
            <person name="Yoshida M."/>
        </authorList>
    </citation>
    <scope>SUBCELLULAR LOCATION [LARGE SCALE ANALYSIS]</scope>
</reference>
<name>YQG2_SCHPO</name>
<protein>
    <recommendedName>
        <fullName>Putative GTPase-activating protein C1620.12c</fullName>
    </recommendedName>
</protein>
<feature type="chain" id="PRO_0000374036" description="Putative GTPase-activating protein C1620.12c">
    <location>
        <begin position="1"/>
        <end position="640"/>
    </location>
</feature>
<feature type="domain" description="Rab-GAP TBC" evidence="2">
    <location>
        <begin position="215"/>
        <end position="408"/>
    </location>
</feature>
<feature type="region of interest" description="Disordered" evidence="3">
    <location>
        <begin position="96"/>
        <end position="120"/>
    </location>
</feature>
<feature type="coiled-coil region" evidence="1">
    <location>
        <begin position="500"/>
        <end position="636"/>
    </location>
</feature>
<feature type="compositionally biased region" description="Low complexity" evidence="3">
    <location>
        <begin position="109"/>
        <end position="120"/>
    </location>
</feature>
<comment type="subcellular location">
    <subcellularLocation>
        <location evidence="4">Nucleus</location>
    </subcellularLocation>
    <subcellularLocation>
        <location evidence="4">Cytoplasm</location>
    </subcellularLocation>
</comment>
<comment type="similarity">
    <text evidence="5">Belongs to the GYP5 family.</text>
</comment>
<sequence>MSKSVNASLSSAINSVTLVKQENLKENLQNGSAVSVGSSESSNHSMKEISLDYSSPSLQQTEEQDRELNFIDSSMLRPTPPQESDNRLAVEKPNIQPLQGHSPVPSFMSTASTNISSSKINNNQTEFEQLRDSYKSHGDLNSAINDSRIQSIIFELNQQCEKESIPVSNIDWLQWASVPLFAYDLPPDPSNPNATSSSPPPLTPILELIKQNNFCIPSPCRKLVWQSLVSAERNELLTLYATLSTTNNSLDSSIRKIIRMQSFRGPLEPFKYSSTTRHKVSTESIFHVLHAFTLFDTTVEYNIEPLLWLTCAFLSYMAQGNAFRSLVCFIQRGGIREFFISQSSSLDESLFALVWGCLGDLAPSVAISLQRIKVSSLCILYPSLACCFADSLQLPEALRLMDLIAIYGLEMFVRLLVAIFLKDRDKIVNMVSHEQWVKYLRSDVLASYRQPLVQKYTFYTRTPVDLNAWVEDSLALNIDTTQFPSYLSYHETSVSHNTYRQNNLEELKNQNDYLTSQITNLEEGMVMLNKENTKLSEALSNHRVTRSEMEEATEILKNNSADLKAQLEKQPQELENRLLQEISILKQRNQKFLKNNATSIQQIQYLDEELGKTLKQLNDLKEKHAQLQTKWKSVSEMFRN</sequence>
<gene>
    <name type="ORF">SPCC1620.12c</name>
</gene>